<sequence length="188" mass="19601">MATNHVLASQLPVNTKSSEIPLQSGTPPPTIIYPFQIEMASLGTADASDSISIASNSLLASVTTLYRHAKLTSLKATIHPTGQAPAFPTTVALAWVPYNSTATSAQILSVYGGQMFCIGGSINSLSPIDVPCNLTNVNPIIKDSVTYSDTPKLLLYSIAQETAPTLATCSVTITGTLTLHSPLLQATA</sequence>
<protein>
    <recommendedName>
        <fullName>Capsid protein</fullName>
    </recommendedName>
    <alternativeName>
        <fullName>Coat protein</fullName>
    </alternativeName>
    <alternativeName>
        <fullName>Virion protein</fullName>
    </alternativeName>
</protein>
<accession>P36303</accession>
<organism>
    <name type="scientific">Kennedya yellow mosaic virus (strain Jervis bay)</name>
    <name type="common">KYMV</name>
    <dbReference type="NCBI Taxonomy" id="36392"/>
    <lineage>
        <taxon>Viruses</taxon>
        <taxon>Riboviria</taxon>
        <taxon>Orthornavirae</taxon>
        <taxon>Kitrinoviricota</taxon>
        <taxon>Alsuviricetes</taxon>
        <taxon>Tymovirales</taxon>
        <taxon>Tymoviridae</taxon>
        <taxon>Tymovirus</taxon>
        <taxon>Tymovirus kennedyae</taxon>
    </lineage>
</organism>
<name>CAPSD_KYMVJ</name>
<reference key="1">
    <citation type="journal article" date="1990" name="J. Gen. Virol.">
        <title>The nucleotide sequence of the genomic RNA of kennedya yellow mosaic tymovirus-Jervis Bay isolate: relationships with potex- and carlaviruses.</title>
        <authorList>
            <person name="Ding S."/>
            <person name="Keese P."/>
            <person name="Gibbs A."/>
        </authorList>
    </citation>
    <scope>NUCLEOTIDE SEQUENCE [GENOMIC RNA]</scope>
</reference>
<evidence type="ECO:0000250" key="1">
    <source>
        <dbReference type="UniProtKB" id="P20125"/>
    </source>
</evidence>
<evidence type="ECO:0000305" key="2"/>
<organismHost>
    <name type="scientific">Desmodium</name>
    <dbReference type="NCBI Taxonomy" id="53866"/>
</organismHost>
<organismHost>
    <name type="scientific">Indigofera australis</name>
    <dbReference type="NCBI Taxonomy" id="53889"/>
</organismHost>
<organismHost>
    <name type="scientific">Kennedia rubicunda</name>
    <dbReference type="NCBI Taxonomy" id="76709"/>
</organismHost>
<keyword id="KW-0167">Capsid protein</keyword>
<keyword id="KW-1142">T=3 icosahedral capsid protein</keyword>
<keyword id="KW-0946">Virion</keyword>
<comment type="function">
    <text evidence="1">Self-assembles to form a T=3 icosahedral capsid composed of 180 copies of the capsid protein. The capsid encapsulates the single-stranded RNA genome.</text>
</comment>
<comment type="subcellular location">
    <subcellularLocation>
        <location evidence="1">Virion</location>
    </subcellularLocation>
</comment>
<comment type="similarity">
    <text evidence="2">Belongs to the tymoviruses capsid protein family.</text>
</comment>
<proteinExistence type="inferred from homology"/>
<dbReference type="EMBL" id="D00637">
    <property type="protein sequence ID" value="BAA00533.1"/>
    <property type="molecule type" value="Genomic_RNA"/>
</dbReference>
<dbReference type="PIR" id="JQ0534">
    <property type="entry name" value="JQ0534"/>
</dbReference>
<dbReference type="RefSeq" id="NP_044329.1">
    <property type="nucleotide sequence ID" value="NC_001746.1"/>
</dbReference>
<dbReference type="SMR" id="P36303"/>
<dbReference type="GeneID" id="1493974"/>
<dbReference type="KEGG" id="vg:1493974"/>
<dbReference type="Proteomes" id="UP000202332">
    <property type="component" value="Segment"/>
</dbReference>
<dbReference type="GO" id="GO:0039617">
    <property type="term" value="C:T=3 icosahedral viral capsid"/>
    <property type="evidence" value="ECO:0007669"/>
    <property type="project" value="UniProtKB-KW"/>
</dbReference>
<dbReference type="GO" id="GO:0005198">
    <property type="term" value="F:structural molecule activity"/>
    <property type="evidence" value="ECO:0007669"/>
    <property type="project" value="InterPro"/>
</dbReference>
<dbReference type="Gene3D" id="2.60.120.20">
    <property type="match status" value="1"/>
</dbReference>
<dbReference type="InterPro" id="IPR000574">
    <property type="entry name" value="Tymo_coat"/>
</dbReference>
<dbReference type="InterPro" id="IPR029053">
    <property type="entry name" value="Viral_coat"/>
</dbReference>
<dbReference type="Pfam" id="PF00983">
    <property type="entry name" value="Tymo_coat"/>
    <property type="match status" value="1"/>
</dbReference>
<dbReference type="SUPFAM" id="SSF88633">
    <property type="entry name" value="Positive stranded ssRNA viruses"/>
    <property type="match status" value="1"/>
</dbReference>
<feature type="chain" id="PRO_0000222929" description="Capsid protein">
    <location>
        <begin position="1"/>
        <end position="188"/>
    </location>
</feature>